<protein>
    <recommendedName>
        <fullName evidence="1">Small ribosomal subunit protein uS5</fullName>
    </recommendedName>
    <alternativeName>
        <fullName evidence="2">30S ribosomal protein S5</fullName>
    </alternativeName>
</protein>
<proteinExistence type="inferred from homology"/>
<feature type="chain" id="PRO_0000131618" description="Small ribosomal subunit protein uS5">
    <location>
        <begin position="1"/>
        <end position="173"/>
    </location>
</feature>
<feature type="domain" description="S5 DRBM" evidence="1">
    <location>
        <begin position="17"/>
        <end position="80"/>
    </location>
</feature>
<name>RS5_SYNY3</name>
<accession>P73304</accession>
<evidence type="ECO:0000255" key="1">
    <source>
        <dbReference type="HAMAP-Rule" id="MF_01307"/>
    </source>
</evidence>
<evidence type="ECO:0000305" key="2"/>
<dbReference type="EMBL" id="BA000022">
    <property type="protein sequence ID" value="BAA17333.1"/>
    <property type="molecule type" value="Genomic_DNA"/>
</dbReference>
<dbReference type="PIR" id="S77486">
    <property type="entry name" value="S77486"/>
</dbReference>
<dbReference type="SMR" id="P73304"/>
<dbReference type="FunCoup" id="P73304">
    <property type="interactions" value="523"/>
</dbReference>
<dbReference type="IntAct" id="P73304">
    <property type="interactions" value="3"/>
</dbReference>
<dbReference type="STRING" id="1148.gene:10498196"/>
<dbReference type="PaxDb" id="1148-1652411"/>
<dbReference type="EnsemblBacteria" id="BAA17333">
    <property type="protein sequence ID" value="BAA17333"/>
    <property type="gene ID" value="BAA17333"/>
</dbReference>
<dbReference type="KEGG" id="syn:sll1812"/>
<dbReference type="eggNOG" id="COG0098">
    <property type="taxonomic scope" value="Bacteria"/>
</dbReference>
<dbReference type="InParanoid" id="P73304"/>
<dbReference type="PhylomeDB" id="P73304"/>
<dbReference type="Proteomes" id="UP000001425">
    <property type="component" value="Chromosome"/>
</dbReference>
<dbReference type="GO" id="GO:0005840">
    <property type="term" value="C:ribosome"/>
    <property type="evidence" value="ECO:0000318"/>
    <property type="project" value="GO_Central"/>
</dbReference>
<dbReference type="GO" id="GO:0015935">
    <property type="term" value="C:small ribosomal subunit"/>
    <property type="evidence" value="ECO:0007669"/>
    <property type="project" value="InterPro"/>
</dbReference>
<dbReference type="GO" id="GO:0019843">
    <property type="term" value="F:rRNA binding"/>
    <property type="evidence" value="ECO:0007669"/>
    <property type="project" value="UniProtKB-UniRule"/>
</dbReference>
<dbReference type="GO" id="GO:0003735">
    <property type="term" value="F:structural constituent of ribosome"/>
    <property type="evidence" value="ECO:0000318"/>
    <property type="project" value="GO_Central"/>
</dbReference>
<dbReference type="GO" id="GO:0006412">
    <property type="term" value="P:translation"/>
    <property type="evidence" value="ECO:0000318"/>
    <property type="project" value="GO_Central"/>
</dbReference>
<dbReference type="FunFam" id="3.30.160.20:FF:000001">
    <property type="entry name" value="30S ribosomal protein S5"/>
    <property type="match status" value="1"/>
</dbReference>
<dbReference type="FunFam" id="3.30.230.10:FF:000002">
    <property type="entry name" value="30S ribosomal protein S5"/>
    <property type="match status" value="1"/>
</dbReference>
<dbReference type="Gene3D" id="3.30.160.20">
    <property type="match status" value="1"/>
</dbReference>
<dbReference type="Gene3D" id="3.30.230.10">
    <property type="match status" value="1"/>
</dbReference>
<dbReference type="HAMAP" id="MF_01307_B">
    <property type="entry name" value="Ribosomal_uS5_B"/>
    <property type="match status" value="1"/>
</dbReference>
<dbReference type="InterPro" id="IPR020568">
    <property type="entry name" value="Ribosomal_Su5_D2-typ_SF"/>
</dbReference>
<dbReference type="InterPro" id="IPR000851">
    <property type="entry name" value="Ribosomal_uS5"/>
</dbReference>
<dbReference type="InterPro" id="IPR005712">
    <property type="entry name" value="Ribosomal_uS5_bac-type"/>
</dbReference>
<dbReference type="InterPro" id="IPR005324">
    <property type="entry name" value="Ribosomal_uS5_C"/>
</dbReference>
<dbReference type="InterPro" id="IPR013810">
    <property type="entry name" value="Ribosomal_uS5_N"/>
</dbReference>
<dbReference type="InterPro" id="IPR018192">
    <property type="entry name" value="Ribosomal_uS5_N_CS"/>
</dbReference>
<dbReference type="InterPro" id="IPR014721">
    <property type="entry name" value="Ribsml_uS5_D2-typ_fold_subgr"/>
</dbReference>
<dbReference type="NCBIfam" id="TIGR01021">
    <property type="entry name" value="rpsE_bact"/>
    <property type="match status" value="1"/>
</dbReference>
<dbReference type="PANTHER" id="PTHR48277">
    <property type="entry name" value="MITOCHONDRIAL RIBOSOMAL PROTEIN S5"/>
    <property type="match status" value="1"/>
</dbReference>
<dbReference type="PANTHER" id="PTHR48277:SF1">
    <property type="entry name" value="MITOCHONDRIAL RIBOSOMAL PROTEIN S5"/>
    <property type="match status" value="1"/>
</dbReference>
<dbReference type="Pfam" id="PF00333">
    <property type="entry name" value="Ribosomal_S5"/>
    <property type="match status" value="1"/>
</dbReference>
<dbReference type="Pfam" id="PF03719">
    <property type="entry name" value="Ribosomal_S5_C"/>
    <property type="match status" value="1"/>
</dbReference>
<dbReference type="SUPFAM" id="SSF54768">
    <property type="entry name" value="dsRNA-binding domain-like"/>
    <property type="match status" value="1"/>
</dbReference>
<dbReference type="SUPFAM" id="SSF54211">
    <property type="entry name" value="Ribosomal protein S5 domain 2-like"/>
    <property type="match status" value="1"/>
</dbReference>
<dbReference type="PROSITE" id="PS00585">
    <property type="entry name" value="RIBOSOMAL_S5"/>
    <property type="match status" value="1"/>
</dbReference>
<dbReference type="PROSITE" id="PS50881">
    <property type="entry name" value="S5_DSRBD"/>
    <property type="match status" value="1"/>
</dbReference>
<keyword id="KW-1185">Reference proteome</keyword>
<keyword id="KW-0687">Ribonucleoprotein</keyword>
<keyword id="KW-0689">Ribosomal protein</keyword>
<keyword id="KW-0694">RNA-binding</keyword>
<keyword id="KW-0699">rRNA-binding</keyword>
<gene>
    <name evidence="1" type="primary">rpsE</name>
    <name evidence="1" type="synonym">rps5</name>
    <name type="ordered locus">sll1812</name>
</gene>
<comment type="function">
    <text evidence="1">With S4 and S12 plays an important role in translational accuracy.</text>
</comment>
<comment type="function">
    <text evidence="1">Located at the back of the 30S subunit body where it stabilizes the conformation of the head with respect to the body.</text>
</comment>
<comment type="subunit">
    <text evidence="1">Part of the 30S ribosomal subunit. Contacts proteins S4 and S8.</text>
</comment>
<comment type="domain">
    <text>The N-terminal domain interacts with the head of the 30S subunit; the C-terminal domain interacts with the body and contacts protein S4. The interaction surface between S4 and S5 is involved in control of translational fidelity.</text>
</comment>
<comment type="similarity">
    <text evidence="1">Belongs to the universal ribosomal protein uS5 family.</text>
</comment>
<sequence>MAKRRKTSREKKEDTNWQERVIQIRRVSKVVKGGKKLSFRAIVVVGNETGQVGVGVGKAGDVIGAVRKGVADGKKQLIEVPLTKSNSITHITNGVSGGAKVVVRPAAPGTGVIAGGAVRTVLELAGVKNILAKQLGSNNPLNNARAAINALETLRTFSEVAEERGVSVEHLYT</sequence>
<reference key="1">
    <citation type="journal article" date="1996" name="DNA Res.">
        <title>Sequence analysis of the genome of the unicellular cyanobacterium Synechocystis sp. strain PCC6803. II. Sequence determination of the entire genome and assignment of potential protein-coding regions.</title>
        <authorList>
            <person name="Kaneko T."/>
            <person name="Sato S."/>
            <person name="Kotani H."/>
            <person name="Tanaka A."/>
            <person name="Asamizu E."/>
            <person name="Nakamura Y."/>
            <person name="Miyajima N."/>
            <person name="Hirosawa M."/>
            <person name="Sugiura M."/>
            <person name="Sasamoto S."/>
            <person name="Kimura T."/>
            <person name="Hosouchi T."/>
            <person name="Matsuno A."/>
            <person name="Muraki A."/>
            <person name="Nakazaki N."/>
            <person name="Naruo K."/>
            <person name="Okumura S."/>
            <person name="Shimpo S."/>
            <person name="Takeuchi C."/>
            <person name="Wada T."/>
            <person name="Watanabe A."/>
            <person name="Yamada M."/>
            <person name="Yasuda M."/>
            <person name="Tabata S."/>
        </authorList>
    </citation>
    <scope>NUCLEOTIDE SEQUENCE [LARGE SCALE GENOMIC DNA]</scope>
    <source>
        <strain>ATCC 27184 / PCC 6803 / Kazusa</strain>
    </source>
</reference>
<organism>
    <name type="scientific">Synechocystis sp. (strain ATCC 27184 / PCC 6803 / Kazusa)</name>
    <dbReference type="NCBI Taxonomy" id="1111708"/>
    <lineage>
        <taxon>Bacteria</taxon>
        <taxon>Bacillati</taxon>
        <taxon>Cyanobacteriota</taxon>
        <taxon>Cyanophyceae</taxon>
        <taxon>Synechococcales</taxon>
        <taxon>Merismopediaceae</taxon>
        <taxon>Synechocystis</taxon>
    </lineage>
</organism>